<feature type="chain" id="PRO_0000117642" description="NADH-ubiquinone oxidoreductase chain 2">
    <location>
        <begin position="1"/>
        <end position="348"/>
    </location>
</feature>
<feature type="transmembrane region" description="Helical" evidence="2">
    <location>
        <begin position="1"/>
        <end position="21"/>
    </location>
</feature>
<feature type="transmembrane region" description="Helical" evidence="2">
    <location>
        <begin position="60"/>
        <end position="80"/>
    </location>
</feature>
<feature type="transmembrane region" description="Helical" evidence="2">
    <location>
        <begin position="96"/>
        <end position="116"/>
    </location>
</feature>
<feature type="transmembrane region" description="Helical" evidence="2">
    <location>
        <begin position="149"/>
        <end position="169"/>
    </location>
</feature>
<feature type="transmembrane region" description="Helical" evidence="2">
    <location>
        <begin position="177"/>
        <end position="194"/>
    </location>
</feature>
<feature type="transmembrane region" description="Helical" evidence="2">
    <location>
        <begin position="198"/>
        <end position="220"/>
    </location>
</feature>
<feature type="transmembrane region" description="Helical" evidence="2">
    <location>
        <begin position="238"/>
        <end position="258"/>
    </location>
</feature>
<feature type="transmembrane region" description="Helical" evidence="2">
    <location>
        <begin position="273"/>
        <end position="293"/>
    </location>
</feature>
<feature type="transmembrane region" description="Helical" evidence="2">
    <location>
        <begin position="328"/>
        <end position="348"/>
    </location>
</feature>
<proteinExistence type="inferred from homology"/>
<sequence>MSPYITASLLFGLLLGPTITATSSHWLIAWMGLEINTLAIIPLMAQHHHPRAVEATTKYFLTQATAAAMLLFASTTNAWLTGQWELQQMTHPLPSTLIILALALKIGLAPLHTWLPEVLQGLDLTTGLILSTWQKLAPFALLLQLQPNNPTLLVILGVLSTLIGGWGGLNQTQLRKILAYSSIAHLGWMILILQFSPTLTLLTLMLYLIMTSSAFLTFILNKTTTINALATSWAKTPILTSLLPLVLLSLGGLPPLTGFMPKWLILQELTKHDLAPTATLAALSALLSLYFYLRLSYAMTLTIAPNNLTGTLPWRTQTTQPNMMTATMAASSILLLPMTPGILTLFNI</sequence>
<protein>
    <recommendedName>
        <fullName>NADH-ubiquinone oxidoreductase chain 2</fullName>
        <ecNumber>7.1.1.2</ecNumber>
    </recommendedName>
    <alternativeName>
        <fullName>NADH dehydrogenase subunit 2</fullName>
    </alternativeName>
</protein>
<evidence type="ECO:0000250" key="1"/>
<evidence type="ECO:0000255" key="2"/>
<evidence type="ECO:0000305" key="3"/>
<accession>Q4JQI6</accession>
<name>NU2M_TETNG</name>
<dbReference type="EC" id="7.1.1.2"/>
<dbReference type="EMBL" id="DQ019313">
    <property type="protein sequence ID" value="AAY26165.1"/>
    <property type="molecule type" value="Genomic_DNA"/>
</dbReference>
<dbReference type="SMR" id="Q4JQI6"/>
<dbReference type="FunCoup" id="Q4JQI6">
    <property type="interactions" value="17"/>
</dbReference>
<dbReference type="STRING" id="99883.ENSTNIP00000007011"/>
<dbReference type="Ensembl" id="ENSTNIT00000007167.1">
    <property type="protein sequence ID" value="ENSTNIP00000007011.1"/>
    <property type="gene ID" value="ENSTNIG00000004377.1"/>
</dbReference>
<dbReference type="GeneTree" id="ENSGT00730000111348"/>
<dbReference type="HOGENOM" id="CLU_007100_1_3_1"/>
<dbReference type="InParanoid" id="Q4JQI6"/>
<dbReference type="OMA" id="HFWVPEV"/>
<dbReference type="TreeFam" id="TF343996"/>
<dbReference type="Proteomes" id="UP000007303">
    <property type="component" value="Mitochondrion"/>
</dbReference>
<dbReference type="GO" id="GO:0005743">
    <property type="term" value="C:mitochondrial inner membrane"/>
    <property type="evidence" value="ECO:0007669"/>
    <property type="project" value="UniProtKB-SubCell"/>
</dbReference>
<dbReference type="GO" id="GO:0008137">
    <property type="term" value="F:NADH dehydrogenase (ubiquinone) activity"/>
    <property type="evidence" value="ECO:0007669"/>
    <property type="project" value="UniProtKB-EC"/>
</dbReference>
<dbReference type="GO" id="GO:0006120">
    <property type="term" value="P:mitochondrial electron transport, NADH to ubiquinone"/>
    <property type="evidence" value="ECO:0007669"/>
    <property type="project" value="InterPro"/>
</dbReference>
<dbReference type="InterPro" id="IPR050175">
    <property type="entry name" value="Complex_I_Subunit_2"/>
</dbReference>
<dbReference type="InterPro" id="IPR010933">
    <property type="entry name" value="NADH_DH_su2_C"/>
</dbReference>
<dbReference type="InterPro" id="IPR003917">
    <property type="entry name" value="NADH_UbQ_OxRdtase_chain2"/>
</dbReference>
<dbReference type="InterPro" id="IPR001750">
    <property type="entry name" value="ND/Mrp_TM"/>
</dbReference>
<dbReference type="PANTHER" id="PTHR46552">
    <property type="entry name" value="NADH-UBIQUINONE OXIDOREDUCTASE CHAIN 2"/>
    <property type="match status" value="1"/>
</dbReference>
<dbReference type="PANTHER" id="PTHR46552:SF1">
    <property type="entry name" value="NADH-UBIQUINONE OXIDOREDUCTASE CHAIN 2"/>
    <property type="match status" value="1"/>
</dbReference>
<dbReference type="Pfam" id="PF06444">
    <property type="entry name" value="NADH_dehy_S2_C"/>
    <property type="match status" value="1"/>
</dbReference>
<dbReference type="Pfam" id="PF00361">
    <property type="entry name" value="Proton_antipo_M"/>
    <property type="match status" value="1"/>
</dbReference>
<dbReference type="PRINTS" id="PR01436">
    <property type="entry name" value="NADHDHGNASE2"/>
</dbReference>
<reference key="1">
    <citation type="journal article" date="2006" name="DNA Seq.">
        <title>The complete nucleotide sequence of the mitochondrial genome of Tetraodon nigroviridis.</title>
        <authorList>
            <person name="Yue G.H."/>
            <person name="Lo L.C."/>
            <person name="Zhu Z.Y."/>
            <person name="Lin G."/>
            <person name="Feng F."/>
        </authorList>
    </citation>
    <scope>NUCLEOTIDE SEQUENCE [LARGE SCALE GENOMIC DNA]</scope>
</reference>
<organism>
    <name type="scientific">Tetraodon nigroviridis</name>
    <name type="common">Spotted green pufferfish</name>
    <name type="synonym">Chelonodon nigroviridis</name>
    <dbReference type="NCBI Taxonomy" id="99883"/>
    <lineage>
        <taxon>Eukaryota</taxon>
        <taxon>Metazoa</taxon>
        <taxon>Chordata</taxon>
        <taxon>Craniata</taxon>
        <taxon>Vertebrata</taxon>
        <taxon>Euteleostomi</taxon>
        <taxon>Actinopterygii</taxon>
        <taxon>Neopterygii</taxon>
        <taxon>Teleostei</taxon>
        <taxon>Neoteleostei</taxon>
        <taxon>Acanthomorphata</taxon>
        <taxon>Eupercaria</taxon>
        <taxon>Tetraodontiformes</taxon>
        <taxon>Tetradontoidea</taxon>
        <taxon>Tetraodontidae</taxon>
        <taxon>Tetraodon</taxon>
    </lineage>
</organism>
<geneLocation type="mitochondrion"/>
<comment type="function">
    <text evidence="1">Core subunit of the mitochondrial membrane respiratory chain NADH dehydrogenase (Complex I) that is believed to belong to the minimal assembly required for catalysis. Complex I functions in the transfer of electrons from NADH to the respiratory chain. The immediate electron acceptor for the enzyme is believed to be ubiquinone (By similarity).</text>
</comment>
<comment type="catalytic activity">
    <reaction>
        <text>a ubiquinone + NADH + 5 H(+)(in) = a ubiquinol + NAD(+) + 4 H(+)(out)</text>
        <dbReference type="Rhea" id="RHEA:29091"/>
        <dbReference type="Rhea" id="RHEA-COMP:9565"/>
        <dbReference type="Rhea" id="RHEA-COMP:9566"/>
        <dbReference type="ChEBI" id="CHEBI:15378"/>
        <dbReference type="ChEBI" id="CHEBI:16389"/>
        <dbReference type="ChEBI" id="CHEBI:17976"/>
        <dbReference type="ChEBI" id="CHEBI:57540"/>
        <dbReference type="ChEBI" id="CHEBI:57945"/>
        <dbReference type="EC" id="7.1.1.2"/>
    </reaction>
</comment>
<comment type="subcellular location">
    <subcellularLocation>
        <location>Mitochondrion inner membrane</location>
        <topology>Multi-pass membrane protein</topology>
    </subcellularLocation>
</comment>
<comment type="similarity">
    <text evidence="3">Belongs to the complex I subunit 2 family.</text>
</comment>
<keyword id="KW-0249">Electron transport</keyword>
<keyword id="KW-0472">Membrane</keyword>
<keyword id="KW-0496">Mitochondrion</keyword>
<keyword id="KW-0999">Mitochondrion inner membrane</keyword>
<keyword id="KW-0520">NAD</keyword>
<keyword id="KW-1185">Reference proteome</keyword>
<keyword id="KW-0679">Respiratory chain</keyword>
<keyword id="KW-1278">Translocase</keyword>
<keyword id="KW-0812">Transmembrane</keyword>
<keyword id="KW-1133">Transmembrane helix</keyword>
<keyword id="KW-0813">Transport</keyword>
<keyword id="KW-0830">Ubiquinone</keyword>
<gene>
    <name type="primary">MT-ND2</name>
    <name type="synonym">MTND2</name>
    <name type="synonym">NADH2</name>
    <name type="synonym">ND2</name>
</gene>